<feature type="chain" id="PRO_0000242976" description="Large ribosomal subunit protein uL5">
    <location>
        <begin position="1"/>
        <end position="185"/>
    </location>
</feature>
<evidence type="ECO:0000255" key="1">
    <source>
        <dbReference type="HAMAP-Rule" id="MF_01333"/>
    </source>
</evidence>
<evidence type="ECO:0000305" key="2"/>
<sequence length="185" mass="21074">MAEAKALPRFKKLYQDNIRKALLEEFKYDNEMQIPRITKVVLNMGVGEATGDSKKPAVAAEDLAMIAGQKAVVTRARNSIATFKLREGMPIGAKVTLRQDRMYEFLDRLITIALPRVRDFRGLNPKSFDGRGNYAMGIKEHIVFPEINYDKVDQIWGMDIIVCTTAKTDDEARSLLRAFNFPFRQ</sequence>
<name>RL5_BRUAB</name>
<gene>
    <name evidence="1" type="primary">rplE</name>
    <name type="ordered locus">BruAb1_1226</name>
</gene>
<keyword id="KW-0687">Ribonucleoprotein</keyword>
<keyword id="KW-0689">Ribosomal protein</keyword>
<keyword id="KW-0694">RNA-binding</keyword>
<keyword id="KW-0699">rRNA-binding</keyword>
<keyword id="KW-0820">tRNA-binding</keyword>
<organism>
    <name type="scientific">Brucella abortus biovar 1 (strain 9-941)</name>
    <dbReference type="NCBI Taxonomy" id="262698"/>
    <lineage>
        <taxon>Bacteria</taxon>
        <taxon>Pseudomonadati</taxon>
        <taxon>Pseudomonadota</taxon>
        <taxon>Alphaproteobacteria</taxon>
        <taxon>Hyphomicrobiales</taxon>
        <taxon>Brucellaceae</taxon>
        <taxon>Brucella/Ochrobactrum group</taxon>
        <taxon>Brucella</taxon>
    </lineage>
</organism>
<dbReference type="EMBL" id="AE017223">
    <property type="protein sequence ID" value="AAX74564.1"/>
    <property type="molecule type" value="Genomic_DNA"/>
</dbReference>
<dbReference type="RefSeq" id="WP_002964350.1">
    <property type="nucleotide sequence ID" value="NC_006932.1"/>
</dbReference>
<dbReference type="SMR" id="Q57CS0"/>
<dbReference type="EnsemblBacteria" id="AAX74564">
    <property type="protein sequence ID" value="AAX74564"/>
    <property type="gene ID" value="BruAb1_1226"/>
</dbReference>
<dbReference type="GeneID" id="97533536"/>
<dbReference type="KEGG" id="bmb:BruAb1_1226"/>
<dbReference type="HOGENOM" id="CLU_061015_2_1_5"/>
<dbReference type="Proteomes" id="UP000000540">
    <property type="component" value="Chromosome I"/>
</dbReference>
<dbReference type="GO" id="GO:1990904">
    <property type="term" value="C:ribonucleoprotein complex"/>
    <property type="evidence" value="ECO:0007669"/>
    <property type="project" value="UniProtKB-KW"/>
</dbReference>
<dbReference type="GO" id="GO:0005840">
    <property type="term" value="C:ribosome"/>
    <property type="evidence" value="ECO:0007669"/>
    <property type="project" value="UniProtKB-KW"/>
</dbReference>
<dbReference type="GO" id="GO:0019843">
    <property type="term" value="F:rRNA binding"/>
    <property type="evidence" value="ECO:0007669"/>
    <property type="project" value="UniProtKB-UniRule"/>
</dbReference>
<dbReference type="GO" id="GO:0003735">
    <property type="term" value="F:structural constituent of ribosome"/>
    <property type="evidence" value="ECO:0007669"/>
    <property type="project" value="InterPro"/>
</dbReference>
<dbReference type="GO" id="GO:0000049">
    <property type="term" value="F:tRNA binding"/>
    <property type="evidence" value="ECO:0007669"/>
    <property type="project" value="UniProtKB-UniRule"/>
</dbReference>
<dbReference type="GO" id="GO:0006412">
    <property type="term" value="P:translation"/>
    <property type="evidence" value="ECO:0007669"/>
    <property type="project" value="UniProtKB-UniRule"/>
</dbReference>
<dbReference type="FunFam" id="3.30.1440.10:FF:000001">
    <property type="entry name" value="50S ribosomal protein L5"/>
    <property type="match status" value="1"/>
</dbReference>
<dbReference type="Gene3D" id="3.30.1440.10">
    <property type="match status" value="1"/>
</dbReference>
<dbReference type="HAMAP" id="MF_01333_B">
    <property type="entry name" value="Ribosomal_uL5_B"/>
    <property type="match status" value="1"/>
</dbReference>
<dbReference type="InterPro" id="IPR002132">
    <property type="entry name" value="Ribosomal_uL5"/>
</dbReference>
<dbReference type="InterPro" id="IPR020930">
    <property type="entry name" value="Ribosomal_uL5_bac-type"/>
</dbReference>
<dbReference type="InterPro" id="IPR031309">
    <property type="entry name" value="Ribosomal_uL5_C"/>
</dbReference>
<dbReference type="InterPro" id="IPR020929">
    <property type="entry name" value="Ribosomal_uL5_CS"/>
</dbReference>
<dbReference type="InterPro" id="IPR022803">
    <property type="entry name" value="Ribosomal_uL5_dom_sf"/>
</dbReference>
<dbReference type="InterPro" id="IPR031310">
    <property type="entry name" value="Ribosomal_uL5_N"/>
</dbReference>
<dbReference type="NCBIfam" id="NF000585">
    <property type="entry name" value="PRK00010.1"/>
    <property type="match status" value="1"/>
</dbReference>
<dbReference type="PANTHER" id="PTHR11994">
    <property type="entry name" value="60S RIBOSOMAL PROTEIN L11-RELATED"/>
    <property type="match status" value="1"/>
</dbReference>
<dbReference type="Pfam" id="PF00281">
    <property type="entry name" value="Ribosomal_L5"/>
    <property type="match status" value="1"/>
</dbReference>
<dbReference type="Pfam" id="PF00673">
    <property type="entry name" value="Ribosomal_L5_C"/>
    <property type="match status" value="1"/>
</dbReference>
<dbReference type="PIRSF" id="PIRSF002161">
    <property type="entry name" value="Ribosomal_L5"/>
    <property type="match status" value="1"/>
</dbReference>
<dbReference type="SUPFAM" id="SSF55282">
    <property type="entry name" value="RL5-like"/>
    <property type="match status" value="1"/>
</dbReference>
<dbReference type="PROSITE" id="PS00358">
    <property type="entry name" value="RIBOSOMAL_L5"/>
    <property type="match status" value="1"/>
</dbReference>
<comment type="function">
    <text evidence="1">This is one of the proteins that bind and probably mediate the attachment of the 5S RNA into the large ribosomal subunit, where it forms part of the central protuberance. In the 70S ribosome it contacts protein S13 of the 30S subunit (bridge B1b), connecting the 2 subunits; this bridge is implicated in subunit movement. Contacts the P site tRNA; the 5S rRNA and some of its associated proteins might help stabilize positioning of ribosome-bound tRNAs.</text>
</comment>
<comment type="subunit">
    <text evidence="1">Part of the 50S ribosomal subunit; part of the 5S rRNA/L5/L18/L25 subcomplex. Contacts the 5S rRNA and the P site tRNA. Forms a bridge to the 30S subunit in the 70S ribosome.</text>
</comment>
<comment type="similarity">
    <text evidence="1">Belongs to the universal ribosomal protein uL5 family.</text>
</comment>
<protein>
    <recommendedName>
        <fullName evidence="1">Large ribosomal subunit protein uL5</fullName>
    </recommendedName>
    <alternativeName>
        <fullName evidence="2">50S ribosomal protein L5</fullName>
    </alternativeName>
</protein>
<reference key="1">
    <citation type="journal article" date="2005" name="J. Bacteriol.">
        <title>Completion of the genome sequence of Brucella abortus and comparison to the highly similar genomes of Brucella melitensis and Brucella suis.</title>
        <authorList>
            <person name="Halling S.M."/>
            <person name="Peterson-Burch B.D."/>
            <person name="Bricker B.J."/>
            <person name="Zuerner R.L."/>
            <person name="Qing Z."/>
            <person name="Li L.-L."/>
            <person name="Kapur V."/>
            <person name="Alt D.P."/>
            <person name="Olsen S.C."/>
        </authorList>
    </citation>
    <scope>NUCLEOTIDE SEQUENCE [LARGE SCALE GENOMIC DNA]</scope>
    <source>
        <strain>9-941</strain>
    </source>
</reference>
<proteinExistence type="inferred from homology"/>
<accession>Q57CS0</accession>